<dbReference type="EC" id="5.3.1.1" evidence="1"/>
<dbReference type="EMBL" id="CP000050">
    <property type="protein sequence ID" value="AAY48653.1"/>
    <property type="molecule type" value="Genomic_DNA"/>
</dbReference>
<dbReference type="RefSeq" id="WP_011037661.1">
    <property type="nucleotide sequence ID" value="NZ_CP155948.1"/>
</dbReference>
<dbReference type="SMR" id="Q4UWC0"/>
<dbReference type="KEGG" id="xcb:XC_1587"/>
<dbReference type="HOGENOM" id="CLU_024251_2_1_6"/>
<dbReference type="UniPathway" id="UPA00109">
    <property type="reaction ID" value="UER00189"/>
</dbReference>
<dbReference type="UniPathway" id="UPA00138"/>
<dbReference type="Proteomes" id="UP000000420">
    <property type="component" value="Chromosome"/>
</dbReference>
<dbReference type="GO" id="GO:0005829">
    <property type="term" value="C:cytosol"/>
    <property type="evidence" value="ECO:0007669"/>
    <property type="project" value="TreeGrafter"/>
</dbReference>
<dbReference type="GO" id="GO:0004807">
    <property type="term" value="F:triose-phosphate isomerase activity"/>
    <property type="evidence" value="ECO:0007669"/>
    <property type="project" value="UniProtKB-UniRule"/>
</dbReference>
<dbReference type="GO" id="GO:0006094">
    <property type="term" value="P:gluconeogenesis"/>
    <property type="evidence" value="ECO:0007669"/>
    <property type="project" value="UniProtKB-UniRule"/>
</dbReference>
<dbReference type="GO" id="GO:0046166">
    <property type="term" value="P:glyceraldehyde-3-phosphate biosynthetic process"/>
    <property type="evidence" value="ECO:0007669"/>
    <property type="project" value="TreeGrafter"/>
</dbReference>
<dbReference type="GO" id="GO:0019563">
    <property type="term" value="P:glycerol catabolic process"/>
    <property type="evidence" value="ECO:0007669"/>
    <property type="project" value="TreeGrafter"/>
</dbReference>
<dbReference type="GO" id="GO:0006096">
    <property type="term" value="P:glycolytic process"/>
    <property type="evidence" value="ECO:0007669"/>
    <property type="project" value="UniProtKB-UniRule"/>
</dbReference>
<dbReference type="CDD" id="cd00311">
    <property type="entry name" value="TIM"/>
    <property type="match status" value="1"/>
</dbReference>
<dbReference type="FunFam" id="3.20.20.70:FF:000020">
    <property type="entry name" value="Triosephosphate isomerase"/>
    <property type="match status" value="1"/>
</dbReference>
<dbReference type="Gene3D" id="3.20.20.70">
    <property type="entry name" value="Aldolase class I"/>
    <property type="match status" value="1"/>
</dbReference>
<dbReference type="HAMAP" id="MF_00147_B">
    <property type="entry name" value="TIM_B"/>
    <property type="match status" value="1"/>
</dbReference>
<dbReference type="InterPro" id="IPR013785">
    <property type="entry name" value="Aldolase_TIM"/>
</dbReference>
<dbReference type="InterPro" id="IPR035990">
    <property type="entry name" value="TIM_sf"/>
</dbReference>
<dbReference type="InterPro" id="IPR022896">
    <property type="entry name" value="TrioseP_Isoase_bac/euk"/>
</dbReference>
<dbReference type="InterPro" id="IPR000652">
    <property type="entry name" value="Triosephosphate_isomerase"/>
</dbReference>
<dbReference type="InterPro" id="IPR020861">
    <property type="entry name" value="Triosephosphate_isomerase_AS"/>
</dbReference>
<dbReference type="NCBIfam" id="TIGR00419">
    <property type="entry name" value="tim"/>
    <property type="match status" value="1"/>
</dbReference>
<dbReference type="PANTHER" id="PTHR21139">
    <property type="entry name" value="TRIOSEPHOSPHATE ISOMERASE"/>
    <property type="match status" value="1"/>
</dbReference>
<dbReference type="PANTHER" id="PTHR21139:SF42">
    <property type="entry name" value="TRIOSEPHOSPHATE ISOMERASE"/>
    <property type="match status" value="1"/>
</dbReference>
<dbReference type="Pfam" id="PF00121">
    <property type="entry name" value="TIM"/>
    <property type="match status" value="1"/>
</dbReference>
<dbReference type="SUPFAM" id="SSF51351">
    <property type="entry name" value="Triosephosphate isomerase (TIM)"/>
    <property type="match status" value="1"/>
</dbReference>
<dbReference type="PROSITE" id="PS00171">
    <property type="entry name" value="TIM_1"/>
    <property type="match status" value="1"/>
</dbReference>
<dbReference type="PROSITE" id="PS51440">
    <property type="entry name" value="TIM_2"/>
    <property type="match status" value="1"/>
</dbReference>
<feature type="chain" id="PRO_0000307596" description="Triosephosphate isomerase">
    <location>
        <begin position="1"/>
        <end position="251"/>
    </location>
</feature>
<feature type="active site" description="Electrophile" evidence="1">
    <location>
        <position position="94"/>
    </location>
</feature>
<feature type="active site" description="Proton acceptor" evidence="1">
    <location>
        <position position="166"/>
    </location>
</feature>
<feature type="binding site" evidence="1">
    <location>
        <begin position="9"/>
        <end position="11"/>
    </location>
    <ligand>
        <name>substrate</name>
    </ligand>
</feature>
<feature type="binding site" evidence="1">
    <location>
        <position position="172"/>
    </location>
    <ligand>
        <name>substrate</name>
    </ligand>
</feature>
<feature type="binding site" evidence="1">
    <location>
        <position position="211"/>
    </location>
    <ligand>
        <name>substrate</name>
    </ligand>
</feature>
<feature type="binding site" evidence="1">
    <location>
        <begin position="232"/>
        <end position="233"/>
    </location>
    <ligand>
        <name>substrate</name>
    </ligand>
</feature>
<gene>
    <name evidence="1" type="primary">tpiA</name>
    <name type="ordered locus">XC_1587</name>
</gene>
<sequence>MRRKIVAGNWKLHGTRAFATELVAQVAAHMPLAGVDVVILPPLPYLGDLIEDFEAHHLAFGAQDVSSNEKGAYTGEVSASMLVDVGAEYGLVGHSERRQYHQESSELVARKFAAAMHAGLIPVLCVGESLEQREAGQTEAILRAQLEPVLSLVGSAGFARAVVAYEPIWAIGTGRTATPDQAQAVHAFIRGEVAKADARIADSLPILYGGSVKPDNASELFSQPDVDGGLVGGASLVAEDFLAIARAAAAC</sequence>
<evidence type="ECO:0000255" key="1">
    <source>
        <dbReference type="HAMAP-Rule" id="MF_00147"/>
    </source>
</evidence>
<proteinExistence type="inferred from homology"/>
<keyword id="KW-0963">Cytoplasm</keyword>
<keyword id="KW-0312">Gluconeogenesis</keyword>
<keyword id="KW-0324">Glycolysis</keyword>
<keyword id="KW-0413">Isomerase</keyword>
<organism>
    <name type="scientific">Xanthomonas campestris pv. campestris (strain 8004)</name>
    <dbReference type="NCBI Taxonomy" id="314565"/>
    <lineage>
        <taxon>Bacteria</taxon>
        <taxon>Pseudomonadati</taxon>
        <taxon>Pseudomonadota</taxon>
        <taxon>Gammaproteobacteria</taxon>
        <taxon>Lysobacterales</taxon>
        <taxon>Lysobacteraceae</taxon>
        <taxon>Xanthomonas</taxon>
    </lineage>
</organism>
<accession>Q4UWC0</accession>
<reference key="1">
    <citation type="journal article" date="2005" name="Genome Res.">
        <title>Comparative and functional genomic analyses of the pathogenicity of phytopathogen Xanthomonas campestris pv. campestris.</title>
        <authorList>
            <person name="Qian W."/>
            <person name="Jia Y."/>
            <person name="Ren S.-X."/>
            <person name="He Y.-Q."/>
            <person name="Feng J.-X."/>
            <person name="Lu L.-F."/>
            <person name="Sun Q."/>
            <person name="Ying G."/>
            <person name="Tang D.-J."/>
            <person name="Tang H."/>
            <person name="Wu W."/>
            <person name="Hao P."/>
            <person name="Wang L."/>
            <person name="Jiang B.-L."/>
            <person name="Zeng S."/>
            <person name="Gu W.-Y."/>
            <person name="Lu G."/>
            <person name="Rong L."/>
            <person name="Tian Y."/>
            <person name="Yao Z."/>
            <person name="Fu G."/>
            <person name="Chen B."/>
            <person name="Fang R."/>
            <person name="Qiang B."/>
            <person name="Chen Z."/>
            <person name="Zhao G.-P."/>
            <person name="Tang J.-L."/>
            <person name="He C."/>
        </authorList>
    </citation>
    <scope>NUCLEOTIDE SEQUENCE [LARGE SCALE GENOMIC DNA]</scope>
    <source>
        <strain>8004</strain>
    </source>
</reference>
<comment type="function">
    <text evidence="1">Involved in the gluconeogenesis. Catalyzes stereospecifically the conversion of dihydroxyacetone phosphate (DHAP) to D-glyceraldehyde-3-phosphate (G3P).</text>
</comment>
<comment type="catalytic activity">
    <reaction evidence="1">
        <text>D-glyceraldehyde 3-phosphate = dihydroxyacetone phosphate</text>
        <dbReference type="Rhea" id="RHEA:18585"/>
        <dbReference type="ChEBI" id="CHEBI:57642"/>
        <dbReference type="ChEBI" id="CHEBI:59776"/>
        <dbReference type="EC" id="5.3.1.1"/>
    </reaction>
</comment>
<comment type="pathway">
    <text evidence="1">Carbohydrate biosynthesis; gluconeogenesis.</text>
</comment>
<comment type="pathway">
    <text evidence="1">Carbohydrate degradation; glycolysis; D-glyceraldehyde 3-phosphate from glycerone phosphate: step 1/1.</text>
</comment>
<comment type="subunit">
    <text evidence="1">Homodimer.</text>
</comment>
<comment type="subcellular location">
    <subcellularLocation>
        <location evidence="1">Cytoplasm</location>
    </subcellularLocation>
</comment>
<comment type="similarity">
    <text evidence="1">Belongs to the triosephosphate isomerase family.</text>
</comment>
<name>TPIS_XANC8</name>
<protein>
    <recommendedName>
        <fullName evidence="1">Triosephosphate isomerase</fullName>
        <shortName evidence="1">TIM</shortName>
        <shortName evidence="1">TPI</shortName>
        <ecNumber evidence="1">5.3.1.1</ecNumber>
    </recommendedName>
    <alternativeName>
        <fullName evidence="1">Triose-phosphate isomerase</fullName>
    </alternativeName>
</protein>